<dbReference type="EMBL" id="AB049656">
    <property type="protein sequence ID" value="BAB40861.1"/>
    <property type="status" value="ALT_FRAME"/>
    <property type="molecule type" value="mRNA"/>
</dbReference>
<dbReference type="EMBL" id="AK095556">
    <property type="protein sequence ID" value="BAC04572.1"/>
    <property type="molecule type" value="mRNA"/>
</dbReference>
<dbReference type="EMBL" id="AK300237">
    <property type="protein sequence ID" value="BAG62005.1"/>
    <property type="molecule type" value="mRNA"/>
</dbReference>
<dbReference type="EMBL" id="AL133215">
    <property type="status" value="NOT_ANNOTATED_CDS"/>
    <property type="molecule type" value="Genomic_DNA"/>
</dbReference>
<dbReference type="EMBL" id="CH471066">
    <property type="protein sequence ID" value="EAW49795.1"/>
    <property type="molecule type" value="Genomic_DNA"/>
</dbReference>
<dbReference type="EMBL" id="CH471066">
    <property type="protein sequence ID" value="EAW49796.1"/>
    <property type="molecule type" value="Genomic_DNA"/>
</dbReference>
<dbReference type="EMBL" id="CH471066">
    <property type="protein sequence ID" value="EAW49797.1"/>
    <property type="molecule type" value="Genomic_DNA"/>
</dbReference>
<dbReference type="EMBL" id="CH471066">
    <property type="protein sequence ID" value="EAW49799.1"/>
    <property type="molecule type" value="Genomic_DNA"/>
</dbReference>
<dbReference type="EMBL" id="BC015905">
    <property type="protein sequence ID" value="AAH15905.1"/>
    <property type="molecule type" value="mRNA"/>
</dbReference>
<dbReference type="EMBL" id="BC041165">
    <property type="protein sequence ID" value="AAH41165.1"/>
    <property type="molecule type" value="mRNA"/>
</dbReference>
<dbReference type="EMBL" id="BC052639">
    <property type="protein sequence ID" value="AAH52639.1"/>
    <property type="molecule type" value="mRNA"/>
</dbReference>
<dbReference type="EMBL" id="BC053373">
    <property type="protein sequence ID" value="AAH53373.1"/>
    <property type="molecule type" value="mRNA"/>
</dbReference>
<dbReference type="CCDS" id="CCDS7502.1">
    <molecule id="Q8N983-1"/>
</dbReference>
<dbReference type="CCDS" id="CCDS7503.1">
    <molecule id="Q8N983-2"/>
</dbReference>
<dbReference type="CCDS" id="CCDS7504.1">
    <molecule id="Q8N983-6"/>
</dbReference>
<dbReference type="CCDS" id="CCDS7505.1">
    <molecule id="Q8N983-4"/>
</dbReference>
<dbReference type="CCDS" id="CCDS76331.1">
    <molecule id="Q8N983-3"/>
</dbReference>
<dbReference type="CCDS" id="CCDS91322.1">
    <molecule id="Q8N983-7"/>
</dbReference>
<dbReference type="RefSeq" id="NP_001295325.1">
    <molecule id="Q8N983-3"/>
    <property type="nucleotide sequence ID" value="NM_001308396.2"/>
</dbReference>
<dbReference type="RefSeq" id="NP_001381911.1">
    <molecule id="Q8N983-7"/>
    <property type="nucleotide sequence ID" value="NM_001394982.1"/>
</dbReference>
<dbReference type="RefSeq" id="NP_115488.2">
    <molecule id="Q8N983-4"/>
    <property type="nucleotide sequence ID" value="NM_032112.2"/>
</dbReference>
<dbReference type="RefSeq" id="NP_789762.1">
    <molecule id="Q8N983-1"/>
    <property type="nucleotide sequence ID" value="NM_176792.3"/>
</dbReference>
<dbReference type="RefSeq" id="NP_789763.1">
    <molecule id="Q8N983-2"/>
    <property type="nucleotide sequence ID" value="NM_176793.2"/>
</dbReference>
<dbReference type="RefSeq" id="NP_789764.1">
    <molecule id="Q8N983-6"/>
    <property type="nucleotide sequence ID" value="NM_176794.2"/>
</dbReference>
<dbReference type="RefSeq" id="XP_005270288.1">
    <molecule id="Q8N983-4"/>
    <property type="nucleotide sequence ID" value="XM_005270231.3"/>
</dbReference>
<dbReference type="RefSeq" id="XP_006718098.1">
    <property type="nucleotide sequence ID" value="XM_006718035.3"/>
</dbReference>
<dbReference type="RefSeq" id="XP_054222931.1">
    <molecule id="Q8N983-4"/>
    <property type="nucleotide sequence ID" value="XM_054366956.1"/>
</dbReference>
<dbReference type="PDB" id="3J7Y">
    <property type="method" value="EM"/>
    <property type="resolution" value="3.40 A"/>
    <property type="chains" value="b=1-155"/>
</dbReference>
<dbReference type="PDB" id="3J9M">
    <property type="method" value="EM"/>
    <property type="resolution" value="3.50 A"/>
    <property type="chains" value="b=1-155"/>
</dbReference>
<dbReference type="PDB" id="5OOL">
    <property type="method" value="EM"/>
    <property type="resolution" value="3.06 A"/>
    <property type="chains" value="b=1-215"/>
</dbReference>
<dbReference type="PDB" id="5OOM">
    <property type="method" value="EM"/>
    <property type="resolution" value="3.03 A"/>
    <property type="chains" value="b=1-215"/>
</dbReference>
<dbReference type="PDB" id="6I9R">
    <property type="method" value="EM"/>
    <property type="resolution" value="3.90 A"/>
    <property type="chains" value="b=1-215"/>
</dbReference>
<dbReference type="PDB" id="6NU2">
    <property type="method" value="EM"/>
    <property type="resolution" value="3.90 A"/>
    <property type="chains" value="b=2-149"/>
</dbReference>
<dbReference type="PDB" id="6NU3">
    <property type="method" value="EM"/>
    <property type="resolution" value="4.40 A"/>
    <property type="chains" value="b=1-215"/>
</dbReference>
<dbReference type="PDB" id="6VLZ">
    <property type="method" value="EM"/>
    <property type="resolution" value="2.97 A"/>
    <property type="chains" value="b=1-155"/>
</dbReference>
<dbReference type="PDB" id="6VMI">
    <property type="method" value="EM"/>
    <property type="resolution" value="2.96 A"/>
    <property type="chains" value="b=1-155"/>
</dbReference>
<dbReference type="PDB" id="6ZM5">
    <property type="method" value="EM"/>
    <property type="resolution" value="2.89 A"/>
    <property type="chains" value="b=2-215"/>
</dbReference>
<dbReference type="PDB" id="6ZM6">
    <property type="method" value="EM"/>
    <property type="resolution" value="2.59 A"/>
    <property type="chains" value="b=2-215"/>
</dbReference>
<dbReference type="PDB" id="6ZS9">
    <property type="method" value="EM"/>
    <property type="resolution" value="4.00 A"/>
    <property type="chains" value="b=1-215"/>
</dbReference>
<dbReference type="PDB" id="6ZSA">
    <property type="method" value="EM"/>
    <property type="resolution" value="4.00 A"/>
    <property type="chains" value="b=1-215"/>
</dbReference>
<dbReference type="PDB" id="6ZSB">
    <property type="method" value="EM"/>
    <property type="resolution" value="4.50 A"/>
    <property type="chains" value="b=1-215"/>
</dbReference>
<dbReference type="PDB" id="6ZSC">
    <property type="method" value="EM"/>
    <property type="resolution" value="3.50 A"/>
    <property type="chains" value="b=1-215"/>
</dbReference>
<dbReference type="PDB" id="6ZSD">
    <property type="method" value="EM"/>
    <property type="resolution" value="3.70 A"/>
    <property type="chains" value="b=1-215"/>
</dbReference>
<dbReference type="PDB" id="6ZSE">
    <property type="method" value="EM"/>
    <property type="resolution" value="5.00 A"/>
    <property type="chains" value="b=1-215"/>
</dbReference>
<dbReference type="PDB" id="6ZSG">
    <property type="method" value="EM"/>
    <property type="resolution" value="4.00 A"/>
    <property type="chains" value="b=1-215"/>
</dbReference>
<dbReference type="PDB" id="7A5F">
    <property type="method" value="EM"/>
    <property type="resolution" value="4.40 A"/>
    <property type="chains" value="b3=1-215"/>
</dbReference>
<dbReference type="PDB" id="7A5G">
    <property type="method" value="EM"/>
    <property type="resolution" value="4.33 A"/>
    <property type="chains" value="b3=1-215"/>
</dbReference>
<dbReference type="PDB" id="7A5H">
    <property type="method" value="EM"/>
    <property type="resolution" value="3.30 A"/>
    <property type="chains" value="b=1-155"/>
</dbReference>
<dbReference type="PDB" id="7A5I">
    <property type="method" value="EM"/>
    <property type="resolution" value="3.70 A"/>
    <property type="chains" value="b3=1-155"/>
</dbReference>
<dbReference type="PDB" id="7A5J">
    <property type="method" value="EM"/>
    <property type="resolution" value="3.10 A"/>
    <property type="chains" value="b=1-155"/>
</dbReference>
<dbReference type="PDB" id="7A5K">
    <property type="method" value="EM"/>
    <property type="resolution" value="3.70 A"/>
    <property type="chains" value="b3=1-155"/>
</dbReference>
<dbReference type="PDB" id="7L08">
    <property type="method" value="EM"/>
    <property type="resolution" value="3.49 A"/>
    <property type="chains" value="b=1-155"/>
</dbReference>
<dbReference type="PDB" id="7L20">
    <property type="method" value="EM"/>
    <property type="resolution" value="3.15 A"/>
    <property type="chains" value="b=1-155"/>
</dbReference>
<dbReference type="PDB" id="7O9K">
    <property type="method" value="EM"/>
    <property type="resolution" value="3.10 A"/>
    <property type="chains" value="b=1-215"/>
</dbReference>
<dbReference type="PDB" id="7O9M">
    <property type="method" value="EM"/>
    <property type="resolution" value="2.50 A"/>
    <property type="chains" value="b=1-215"/>
</dbReference>
<dbReference type="PDB" id="7ODR">
    <property type="method" value="EM"/>
    <property type="resolution" value="2.90 A"/>
    <property type="chains" value="b=1-215"/>
</dbReference>
<dbReference type="PDB" id="7ODS">
    <property type="method" value="EM"/>
    <property type="resolution" value="3.10 A"/>
    <property type="chains" value="b=1-215"/>
</dbReference>
<dbReference type="PDB" id="7ODT">
    <property type="method" value="EM"/>
    <property type="resolution" value="3.10 A"/>
    <property type="chains" value="b=1-215"/>
</dbReference>
<dbReference type="PDB" id="7OF0">
    <property type="method" value="EM"/>
    <property type="resolution" value="2.20 A"/>
    <property type="chains" value="b=1-215"/>
</dbReference>
<dbReference type="PDB" id="7OF2">
    <property type="method" value="EM"/>
    <property type="resolution" value="2.70 A"/>
    <property type="chains" value="b=1-215"/>
</dbReference>
<dbReference type="PDB" id="7OF3">
    <property type="method" value="EM"/>
    <property type="resolution" value="2.70 A"/>
    <property type="chains" value="b=1-215"/>
</dbReference>
<dbReference type="PDB" id="7OF4">
    <property type="method" value="EM"/>
    <property type="resolution" value="2.70 A"/>
    <property type="chains" value="b=1-215"/>
</dbReference>
<dbReference type="PDB" id="7OF5">
    <property type="method" value="EM"/>
    <property type="resolution" value="2.90 A"/>
    <property type="chains" value="b=1-215"/>
</dbReference>
<dbReference type="PDB" id="7OF6">
    <property type="method" value="EM"/>
    <property type="resolution" value="2.60 A"/>
    <property type="chains" value="b=1-215"/>
</dbReference>
<dbReference type="PDB" id="7OF7">
    <property type="method" value="EM"/>
    <property type="resolution" value="2.50 A"/>
    <property type="chains" value="b=1-215"/>
</dbReference>
<dbReference type="PDB" id="7OG4">
    <property type="method" value="EM"/>
    <property type="resolution" value="3.80 A"/>
    <property type="chains" value="b=1-215"/>
</dbReference>
<dbReference type="PDB" id="7OI6">
    <property type="method" value="EM"/>
    <property type="resolution" value="5.70 A"/>
    <property type="chains" value="b=1-215"/>
</dbReference>
<dbReference type="PDB" id="7OI7">
    <property type="method" value="EM"/>
    <property type="resolution" value="3.50 A"/>
    <property type="chains" value="b=1-215"/>
</dbReference>
<dbReference type="PDB" id="7OI8">
    <property type="method" value="EM"/>
    <property type="resolution" value="3.50 A"/>
    <property type="chains" value="b=1-215"/>
</dbReference>
<dbReference type="PDB" id="7OI9">
    <property type="method" value="EM"/>
    <property type="resolution" value="3.30 A"/>
    <property type="chains" value="b=1-215"/>
</dbReference>
<dbReference type="PDB" id="7OIA">
    <property type="method" value="EM"/>
    <property type="resolution" value="3.20 A"/>
    <property type="chains" value="b=1-215"/>
</dbReference>
<dbReference type="PDB" id="7OIB">
    <property type="method" value="EM"/>
    <property type="resolution" value="3.30 A"/>
    <property type="chains" value="b=1-215"/>
</dbReference>
<dbReference type="PDB" id="7OIC">
    <property type="method" value="EM"/>
    <property type="resolution" value="3.10 A"/>
    <property type="chains" value="b=1-215"/>
</dbReference>
<dbReference type="PDB" id="7OID">
    <property type="method" value="EM"/>
    <property type="resolution" value="3.70 A"/>
    <property type="chains" value="b=1-215"/>
</dbReference>
<dbReference type="PDB" id="7OIE">
    <property type="method" value="EM"/>
    <property type="resolution" value="3.50 A"/>
    <property type="chains" value="b=1-215"/>
</dbReference>
<dbReference type="PDB" id="7PD3">
    <property type="method" value="EM"/>
    <property type="resolution" value="3.40 A"/>
    <property type="chains" value="b=1-215"/>
</dbReference>
<dbReference type="PDB" id="7PO4">
    <property type="method" value="EM"/>
    <property type="resolution" value="2.56 A"/>
    <property type="chains" value="b=2-215"/>
</dbReference>
<dbReference type="PDB" id="7QH6">
    <property type="method" value="EM"/>
    <property type="resolution" value="3.08 A"/>
    <property type="chains" value="b=1-215"/>
</dbReference>
<dbReference type="PDB" id="7QH7">
    <property type="method" value="EM"/>
    <property type="resolution" value="2.89 A"/>
    <property type="chains" value="b=2-149"/>
</dbReference>
<dbReference type="PDB" id="7QI4">
    <property type="method" value="EM"/>
    <property type="resolution" value="2.21 A"/>
    <property type="chains" value="b=1-215"/>
</dbReference>
<dbReference type="PDB" id="7QI5">
    <property type="method" value="EM"/>
    <property type="resolution" value="2.63 A"/>
    <property type="chains" value="b=1-215"/>
</dbReference>
<dbReference type="PDB" id="7QI6">
    <property type="method" value="EM"/>
    <property type="resolution" value="2.98 A"/>
    <property type="chains" value="b=1-215"/>
</dbReference>
<dbReference type="PDB" id="8ANY">
    <property type="method" value="EM"/>
    <property type="resolution" value="2.85 A"/>
    <property type="chains" value="b=1-215"/>
</dbReference>
<dbReference type="PDB" id="8K2A">
    <property type="method" value="EM"/>
    <property type="resolution" value="2.90 A"/>
    <property type="chains" value="Lq=1-215"/>
</dbReference>
<dbReference type="PDB" id="8K2B">
    <property type="method" value="EM"/>
    <property type="resolution" value="3.40 A"/>
    <property type="chains" value="Lq=1-215"/>
</dbReference>
<dbReference type="PDB" id="8OIR">
    <property type="method" value="EM"/>
    <property type="resolution" value="3.10 A"/>
    <property type="chains" value="Bs=1-215"/>
</dbReference>
<dbReference type="PDB" id="8OIT">
    <property type="method" value="EM"/>
    <property type="resolution" value="2.90 A"/>
    <property type="chains" value="Bs=1-215"/>
</dbReference>
<dbReference type="PDB" id="8PK0">
    <property type="method" value="EM"/>
    <property type="resolution" value="3.03 A"/>
    <property type="chains" value="b=1-215"/>
</dbReference>
<dbReference type="PDB" id="8QSJ">
    <property type="method" value="EM"/>
    <property type="resolution" value="3.00 A"/>
    <property type="chains" value="b=1-215"/>
</dbReference>
<dbReference type="PDB" id="8QU5">
    <property type="method" value="EM"/>
    <property type="resolution" value="2.42 A"/>
    <property type="chains" value="b=1-215"/>
</dbReference>
<dbReference type="PDB" id="8RRI">
    <property type="method" value="EM"/>
    <property type="resolution" value="2.40 A"/>
    <property type="chains" value="b=1-215"/>
</dbReference>
<dbReference type="PDB" id="8XT0">
    <property type="method" value="EM"/>
    <property type="resolution" value="3.20 A"/>
    <property type="chains" value="Lq=1-215"/>
</dbReference>
<dbReference type="PDB" id="8XT1">
    <property type="method" value="EM"/>
    <property type="resolution" value="3.10 A"/>
    <property type="chains" value="Lq=1-215"/>
</dbReference>
<dbReference type="PDB" id="8XT2">
    <property type="method" value="EM"/>
    <property type="resolution" value="3.30 A"/>
    <property type="chains" value="Lq=1-215"/>
</dbReference>
<dbReference type="PDB" id="8XT3">
    <property type="method" value="EM"/>
    <property type="resolution" value="3.10 A"/>
    <property type="chains" value="Lq=1-215"/>
</dbReference>
<dbReference type="PDBsum" id="3J7Y"/>
<dbReference type="PDBsum" id="3J9M"/>
<dbReference type="PDBsum" id="5OOL"/>
<dbReference type="PDBsum" id="5OOM"/>
<dbReference type="PDBsum" id="6I9R"/>
<dbReference type="PDBsum" id="6NU2"/>
<dbReference type="PDBsum" id="6NU3"/>
<dbReference type="PDBsum" id="6VLZ"/>
<dbReference type="PDBsum" id="6VMI"/>
<dbReference type="PDBsum" id="6ZM5"/>
<dbReference type="PDBsum" id="6ZM6"/>
<dbReference type="PDBsum" id="6ZS9"/>
<dbReference type="PDBsum" id="6ZSA"/>
<dbReference type="PDBsum" id="6ZSB"/>
<dbReference type="PDBsum" id="6ZSC"/>
<dbReference type="PDBsum" id="6ZSD"/>
<dbReference type="PDBsum" id="6ZSE"/>
<dbReference type="PDBsum" id="6ZSG"/>
<dbReference type="PDBsum" id="7A5F"/>
<dbReference type="PDBsum" id="7A5G"/>
<dbReference type="PDBsum" id="7A5H"/>
<dbReference type="PDBsum" id="7A5I"/>
<dbReference type="PDBsum" id="7A5J"/>
<dbReference type="PDBsum" id="7A5K"/>
<dbReference type="PDBsum" id="7L08"/>
<dbReference type="PDBsum" id="7L20"/>
<dbReference type="PDBsum" id="7O9K"/>
<dbReference type="PDBsum" id="7O9M"/>
<dbReference type="PDBsum" id="7ODR"/>
<dbReference type="PDBsum" id="7ODS"/>
<dbReference type="PDBsum" id="7ODT"/>
<dbReference type="PDBsum" id="7OF0"/>
<dbReference type="PDBsum" id="7OF2"/>
<dbReference type="PDBsum" id="7OF3"/>
<dbReference type="PDBsum" id="7OF4"/>
<dbReference type="PDBsum" id="7OF5"/>
<dbReference type="PDBsum" id="7OF6"/>
<dbReference type="PDBsum" id="7OF7"/>
<dbReference type="PDBsum" id="7OG4"/>
<dbReference type="PDBsum" id="7OI6"/>
<dbReference type="PDBsum" id="7OI7"/>
<dbReference type="PDBsum" id="7OI8"/>
<dbReference type="PDBsum" id="7OI9"/>
<dbReference type="PDBsum" id="7OIA"/>
<dbReference type="PDBsum" id="7OIB"/>
<dbReference type="PDBsum" id="7OIC"/>
<dbReference type="PDBsum" id="7OID"/>
<dbReference type="PDBsum" id="7OIE"/>
<dbReference type="PDBsum" id="7PD3"/>
<dbReference type="PDBsum" id="7PO4"/>
<dbReference type="PDBsum" id="7QH6"/>
<dbReference type="PDBsum" id="7QH7"/>
<dbReference type="PDBsum" id="7QI4"/>
<dbReference type="PDBsum" id="7QI5"/>
<dbReference type="PDBsum" id="7QI6"/>
<dbReference type="PDBsum" id="8ANY"/>
<dbReference type="PDBsum" id="8K2A"/>
<dbReference type="PDBsum" id="8K2B"/>
<dbReference type="PDBsum" id="8OIR"/>
<dbReference type="PDBsum" id="8OIT"/>
<dbReference type="PDBsum" id="8PK0"/>
<dbReference type="PDBsum" id="8QSJ"/>
<dbReference type="PDBsum" id="8QU5"/>
<dbReference type="PDBsum" id="8RRI"/>
<dbReference type="PDBsum" id="8XT0"/>
<dbReference type="PDBsum" id="8XT1"/>
<dbReference type="PDBsum" id="8XT2"/>
<dbReference type="PDBsum" id="8XT3"/>
<dbReference type="EMDB" id="EMD-0514"/>
<dbReference type="EMDB" id="EMD-0515"/>
<dbReference type="EMDB" id="EMD-11278"/>
<dbReference type="EMDB" id="EMD-11279"/>
<dbReference type="EMDB" id="EMD-11390"/>
<dbReference type="EMDB" id="EMD-11391"/>
<dbReference type="EMDB" id="EMD-11392"/>
<dbReference type="EMDB" id="EMD-11393"/>
<dbReference type="EMDB" id="EMD-11394"/>
<dbReference type="EMDB" id="EMD-11395"/>
<dbReference type="EMDB" id="EMD-11397"/>
<dbReference type="EMDB" id="EMD-11641"/>
<dbReference type="EMDB" id="EMD-11642"/>
<dbReference type="EMDB" id="EMD-11643"/>
<dbReference type="EMDB" id="EMD-11644"/>
<dbReference type="EMDB" id="EMD-11645"/>
<dbReference type="EMDB" id="EMD-11646"/>
<dbReference type="EMDB" id="EMD-12763"/>
<dbReference type="EMDB" id="EMD-12764"/>
<dbReference type="EMDB" id="EMD-12845"/>
<dbReference type="EMDB" id="EMD-12846"/>
<dbReference type="EMDB" id="EMD-12847"/>
<dbReference type="EMDB" id="EMD-12865"/>
<dbReference type="EMDB" id="EMD-12867"/>
<dbReference type="EMDB" id="EMD-12868"/>
<dbReference type="EMDB" id="EMD-12869"/>
<dbReference type="EMDB" id="EMD-12870"/>
<dbReference type="EMDB" id="EMD-12871"/>
<dbReference type="EMDB" id="EMD-12872"/>
<dbReference type="EMDB" id="EMD-12877"/>
<dbReference type="EMDB" id="EMD-12919"/>
<dbReference type="EMDB" id="EMD-12920"/>
<dbReference type="EMDB" id="EMD-12921"/>
<dbReference type="EMDB" id="EMD-12922"/>
<dbReference type="EMDB" id="EMD-12923"/>
<dbReference type="EMDB" id="EMD-12924"/>
<dbReference type="EMDB" id="EMD-12925"/>
<dbReference type="EMDB" id="EMD-12926"/>
<dbReference type="EMDB" id="EMD-12927"/>
<dbReference type="EMDB" id="EMD-13329"/>
<dbReference type="EMDB" id="EMD-13562"/>
<dbReference type="EMDB" id="EMD-13965"/>
<dbReference type="EMDB" id="EMD-13967"/>
<dbReference type="EMDB" id="EMD-13980"/>
<dbReference type="EMDB" id="EMD-13981"/>
<dbReference type="EMDB" id="EMD-13982"/>
<dbReference type="EMDB" id="EMD-15544"/>
<dbReference type="EMDB" id="EMD-16897"/>
<dbReference type="EMDB" id="EMD-16899"/>
<dbReference type="EMDB" id="EMD-17719"/>
<dbReference type="EMDB" id="EMD-19460"/>
<dbReference type="EMDB" id="EMD-21233"/>
<dbReference type="EMDB" id="EMD-21242"/>
<dbReference type="EMDB" id="EMD-23096"/>
<dbReference type="EMDB" id="EMD-23121"/>
<dbReference type="EMDB" id="EMD-36836"/>
<dbReference type="EMDB" id="EMD-36837"/>
<dbReference type="EMDB" id="EMD-3842"/>
<dbReference type="EMDB" id="EMD-3843"/>
<dbReference type="EMDB" id="EMD-38632"/>
<dbReference type="EMDB" id="EMD-38633"/>
<dbReference type="EMDB" id="EMD-38634"/>
<dbReference type="EMDB" id="EMD-38635"/>
<dbReference type="EMDB" id="EMD-4434"/>
<dbReference type="SMR" id="Q8N983"/>
<dbReference type="BioGRID" id="124130">
    <property type="interactions" value="204"/>
</dbReference>
<dbReference type="ComplexPortal" id="CPX-5226">
    <property type="entry name" value="39S mitochondrial large ribosomal subunit"/>
</dbReference>
<dbReference type="CORUM" id="Q8N983"/>
<dbReference type="FunCoup" id="Q8N983">
    <property type="interactions" value="1269"/>
</dbReference>
<dbReference type="IntAct" id="Q8N983">
    <property type="interactions" value="75"/>
</dbReference>
<dbReference type="MINT" id="Q8N983"/>
<dbReference type="STRING" id="9606.ENSP00000339844"/>
<dbReference type="GlyGen" id="Q8N983">
    <property type="glycosylation" value="1 site, 1 O-linked glycan (1 site)"/>
</dbReference>
<dbReference type="iPTMnet" id="Q8N983"/>
<dbReference type="PhosphoSitePlus" id="Q8N983"/>
<dbReference type="SwissPalm" id="Q8N983"/>
<dbReference type="BioMuta" id="MRPL43"/>
<dbReference type="DMDM" id="50401603"/>
<dbReference type="jPOST" id="Q8N983"/>
<dbReference type="MassIVE" id="Q8N983"/>
<dbReference type="PaxDb" id="9606-ENSP00000339844"/>
<dbReference type="PeptideAtlas" id="Q8N983"/>
<dbReference type="ProteomicsDB" id="3124"/>
<dbReference type="ProteomicsDB" id="72499">
    <molecule id="Q8N983-1"/>
</dbReference>
<dbReference type="ProteomicsDB" id="72500">
    <molecule id="Q8N983-2"/>
</dbReference>
<dbReference type="ProteomicsDB" id="72501">
    <molecule id="Q8N983-3"/>
</dbReference>
<dbReference type="ProteomicsDB" id="72502">
    <molecule id="Q8N983-4"/>
</dbReference>
<dbReference type="ProteomicsDB" id="8648"/>
<dbReference type="Pumba" id="Q8N983"/>
<dbReference type="TopDownProteomics" id="Q8N983-4">
    <molecule id="Q8N983-4"/>
</dbReference>
<dbReference type="Antibodypedia" id="31225">
    <property type="antibodies" value="46 antibodies from 16 providers"/>
</dbReference>
<dbReference type="DNASU" id="84545"/>
<dbReference type="Ensembl" id="ENST00000299179.9">
    <molecule id="Q8N983-2"/>
    <property type="protein sequence ID" value="ENSP00000299179.5"/>
    <property type="gene ID" value="ENSG00000055950.17"/>
</dbReference>
<dbReference type="Ensembl" id="ENST00000318325.6">
    <molecule id="Q8N983-1"/>
    <property type="protein sequence ID" value="ENSP00000315364.2"/>
    <property type="gene ID" value="ENSG00000055950.17"/>
</dbReference>
<dbReference type="Ensembl" id="ENST00000318364.13">
    <molecule id="Q8N983-4"/>
    <property type="protein sequence ID" value="ENSP00000315948.8"/>
    <property type="gene ID" value="ENSG00000055950.17"/>
</dbReference>
<dbReference type="Ensembl" id="ENST00000342071.5">
    <molecule id="Q8N983-6"/>
    <property type="protein sequence ID" value="ENSP00000339844.1"/>
    <property type="gene ID" value="ENSG00000055950.17"/>
</dbReference>
<dbReference type="Ensembl" id="ENST00000370234.4">
    <molecule id="Q8N983-3"/>
    <property type="protein sequence ID" value="ENSP00000359254.4"/>
    <property type="gene ID" value="ENSG00000055950.17"/>
</dbReference>
<dbReference type="Ensembl" id="ENST00000370236.5">
    <molecule id="Q8N983-4"/>
    <property type="protein sequence ID" value="ENSP00000359256.1"/>
    <property type="gene ID" value="ENSG00000055950.17"/>
</dbReference>
<dbReference type="Ensembl" id="ENST00000370242.8">
    <molecule id="Q8N983-7"/>
    <property type="protein sequence ID" value="ENSP00000359262.4"/>
    <property type="gene ID" value="ENSG00000055950.17"/>
</dbReference>
<dbReference type="GeneID" id="84545"/>
<dbReference type="KEGG" id="hsa:84545"/>
<dbReference type="MANE-Select" id="ENST00000318364.13">
    <molecule id="Q8N983-4"/>
    <property type="protein sequence ID" value="ENSP00000315948.8"/>
    <property type="RefSeq nucleotide sequence ID" value="NM_032112.3"/>
    <property type="RefSeq protein sequence ID" value="NP_115488.2"/>
</dbReference>
<dbReference type="UCSC" id="uc001kry.2">
    <molecule id="Q8N983-1"/>
    <property type="organism name" value="human"/>
</dbReference>
<dbReference type="AGR" id="HGNC:14517"/>
<dbReference type="CTD" id="84545"/>
<dbReference type="DisGeNET" id="84545"/>
<dbReference type="GeneCards" id="MRPL43"/>
<dbReference type="HGNC" id="HGNC:14517">
    <property type="gene designation" value="MRPL43"/>
</dbReference>
<dbReference type="HPA" id="ENSG00000055950">
    <property type="expression patterns" value="Low tissue specificity"/>
</dbReference>
<dbReference type="MalaCards" id="MRPL43"/>
<dbReference type="MIM" id="611848">
    <property type="type" value="gene"/>
</dbReference>
<dbReference type="neXtProt" id="NX_Q8N983"/>
<dbReference type="OpenTargets" id="ENSG00000055950"/>
<dbReference type="PharmGKB" id="PA30975"/>
<dbReference type="VEuPathDB" id="HostDB:ENSG00000055950"/>
<dbReference type="eggNOG" id="KOG3445">
    <property type="taxonomic scope" value="Eukaryota"/>
</dbReference>
<dbReference type="GeneTree" id="ENSGT00390000015375"/>
<dbReference type="HOGENOM" id="CLU_094620_0_0_1"/>
<dbReference type="InParanoid" id="Q8N983"/>
<dbReference type="OMA" id="ISKWIDL"/>
<dbReference type="OrthoDB" id="88at2759"/>
<dbReference type="PAN-GO" id="Q8N983">
    <property type="GO annotations" value="2 GO annotations based on evolutionary models"/>
</dbReference>
<dbReference type="PhylomeDB" id="Q8N983"/>
<dbReference type="TreeFam" id="TF314535"/>
<dbReference type="PathwayCommons" id="Q8N983"/>
<dbReference type="Reactome" id="R-HSA-5368286">
    <property type="pathway name" value="Mitochondrial translation initiation"/>
</dbReference>
<dbReference type="Reactome" id="R-HSA-5389840">
    <property type="pathway name" value="Mitochondrial translation elongation"/>
</dbReference>
<dbReference type="Reactome" id="R-HSA-5419276">
    <property type="pathway name" value="Mitochondrial translation termination"/>
</dbReference>
<dbReference type="SignaLink" id="Q8N983"/>
<dbReference type="SIGNOR" id="Q8N983"/>
<dbReference type="BioGRID-ORCS" id="84545">
    <property type="hits" value="569 hits in 1170 CRISPR screens"/>
</dbReference>
<dbReference type="CD-CODE" id="5965E019">
    <property type="entry name" value="mtRNA granule"/>
</dbReference>
<dbReference type="ChiTaRS" id="MRPL43">
    <property type="organism name" value="human"/>
</dbReference>
<dbReference type="EvolutionaryTrace" id="Q8N983"/>
<dbReference type="GenomeRNAi" id="84545"/>
<dbReference type="Pharos" id="Q8N983">
    <property type="development level" value="Tdark"/>
</dbReference>
<dbReference type="PRO" id="PR:Q8N983"/>
<dbReference type="Proteomes" id="UP000005640">
    <property type="component" value="Chromosome 10"/>
</dbReference>
<dbReference type="RNAct" id="Q8N983">
    <property type="molecule type" value="protein"/>
</dbReference>
<dbReference type="Bgee" id="ENSG00000055950">
    <property type="expression patterns" value="Expressed in pancreatic ductal cell and 187 other cell types or tissues"/>
</dbReference>
<dbReference type="ExpressionAtlas" id="Q8N983">
    <property type="expression patterns" value="baseline and differential"/>
</dbReference>
<dbReference type="GO" id="GO:0005743">
    <property type="term" value="C:mitochondrial inner membrane"/>
    <property type="evidence" value="ECO:0000304"/>
    <property type="project" value="Reactome"/>
</dbReference>
<dbReference type="GO" id="GO:0005762">
    <property type="term" value="C:mitochondrial large ribosomal subunit"/>
    <property type="evidence" value="ECO:0000314"/>
    <property type="project" value="UniProtKB"/>
</dbReference>
<dbReference type="GO" id="GO:0005761">
    <property type="term" value="C:mitochondrial ribosome"/>
    <property type="evidence" value="ECO:0000303"/>
    <property type="project" value="UniProtKB"/>
</dbReference>
<dbReference type="GO" id="GO:0005739">
    <property type="term" value="C:mitochondrion"/>
    <property type="evidence" value="ECO:0000314"/>
    <property type="project" value="UniProtKB"/>
</dbReference>
<dbReference type="GO" id="GO:0003723">
    <property type="term" value="F:RNA binding"/>
    <property type="evidence" value="ECO:0007005"/>
    <property type="project" value="UniProtKB"/>
</dbReference>
<dbReference type="GO" id="GO:0003735">
    <property type="term" value="F:structural constituent of ribosome"/>
    <property type="evidence" value="ECO:0000318"/>
    <property type="project" value="GO_Central"/>
</dbReference>
<dbReference type="GO" id="GO:0032543">
    <property type="term" value="P:mitochondrial translation"/>
    <property type="evidence" value="ECO:0000303"/>
    <property type="project" value="ComplexPortal"/>
</dbReference>
<dbReference type="GO" id="GO:0006412">
    <property type="term" value="P:translation"/>
    <property type="evidence" value="ECO:0000303"/>
    <property type="project" value="UniProtKB"/>
</dbReference>
<dbReference type="FunFam" id="3.40.30.10:FF:000078">
    <property type="entry name" value="39S ribosomal protein L43, mitochondrial"/>
    <property type="match status" value="1"/>
</dbReference>
<dbReference type="Gene3D" id="3.40.30.10">
    <property type="entry name" value="Glutaredoxin"/>
    <property type="match status" value="1"/>
</dbReference>
<dbReference type="InterPro" id="IPR039927">
    <property type="entry name" value="Ribosomal_mL43"/>
</dbReference>
<dbReference type="InterPro" id="IPR007741">
    <property type="entry name" value="Ribosomal_mL43/mS25/NADH_DH"/>
</dbReference>
<dbReference type="InterPro" id="IPR036249">
    <property type="entry name" value="Thioredoxin-like_sf"/>
</dbReference>
<dbReference type="PANTHER" id="PTHR21396">
    <property type="entry name" value="39S RIBOSOMAL PROTEIN L43"/>
    <property type="match status" value="1"/>
</dbReference>
<dbReference type="PANTHER" id="PTHR21396:SF2">
    <property type="entry name" value="LARGE RIBOSOMAL SUBUNIT PROTEIN ML43"/>
    <property type="match status" value="1"/>
</dbReference>
<dbReference type="Pfam" id="PF05047">
    <property type="entry name" value="L51_S25_CI-B8"/>
    <property type="match status" value="1"/>
</dbReference>
<dbReference type="SMART" id="SM00916">
    <property type="entry name" value="L51_S25_CI-B8"/>
    <property type="match status" value="1"/>
</dbReference>
<dbReference type="SUPFAM" id="SSF52833">
    <property type="entry name" value="Thioredoxin-like"/>
    <property type="match status" value="1"/>
</dbReference>
<comment type="subunit">
    <text evidence="3 4 5 6">Component of the mitochondrial large ribosomal subunit (mt-LSU) (PubMed:25278503, PubMed:25838379, PubMed:28892042, PubMed:35177605). Mature mammalian 55S mitochondrial ribosomes consist of a small (28S) and a large (39S) subunit. The 28S small subunit contains a 12S ribosomal RNA (12S mt-rRNA) and 30 different proteins. The 39S large subunit contains a 16S rRNA (16S mt-rRNA), a copy of mitochondrial valine transfer RNA (mt-tRNA(Val)), which plays an integral structural role, and 52 different proteins.</text>
</comment>
<comment type="interaction">
    <interactant intactId="EBI-1043145">
        <id>Q8N983</id>
    </interactant>
    <interactant intactId="EBI-740459">
        <id>P51116</id>
        <label>FXR2</label>
    </interactant>
    <organismsDiffer>false</organismsDiffer>
    <experiments>3</experiments>
</comment>
<comment type="interaction">
    <interactant intactId="EBI-11109389">
        <id>Q8N983-3</id>
    </interactant>
    <interactant intactId="EBI-399080">
        <id>Q92993</id>
        <label>KAT5</label>
    </interactant>
    <organismsDiffer>false</organismsDiffer>
    <experiments>3</experiments>
</comment>
<comment type="interaction">
    <interactant intactId="EBI-11109389">
        <id>Q8N983-3</id>
    </interactant>
    <interactant intactId="EBI-11742507">
        <id>Q8TAP4-4</id>
        <label>LMO3</label>
    </interactant>
    <organismsDiffer>false</organismsDiffer>
    <experiments>3</experiments>
</comment>
<comment type="interaction">
    <interactant intactId="EBI-11109389">
        <id>Q8N983-3</id>
    </interactant>
    <interactant intactId="EBI-1383528">
        <id>P17252</id>
        <label>PRKCA</label>
    </interactant>
    <organismsDiffer>false</organismsDiffer>
    <experiments>3</experiments>
</comment>
<comment type="interaction">
    <interactant intactId="EBI-11109389">
        <id>Q8N983-3</id>
    </interactant>
    <interactant intactId="EBI-9090795">
        <id>Q15047-2</id>
        <label>SETDB1</label>
    </interactant>
    <organismsDiffer>false</organismsDiffer>
    <experiments>3</experiments>
</comment>
<comment type="interaction">
    <interactant intactId="EBI-11109389">
        <id>Q8N983-3</id>
    </interactant>
    <interactant intactId="EBI-359832">
        <id>P61981</id>
        <label>YWHAG</label>
    </interactant>
    <organismsDiffer>false</organismsDiffer>
    <experiments>3</experiments>
</comment>
<comment type="subcellular location">
    <subcellularLocation>
        <location evidence="3 4 5">Mitochondrion</location>
    </subcellularLocation>
</comment>
<comment type="alternative products">
    <event type="alternative splicing"/>
    <isoform>
        <id>Q8N983-1</id>
        <name>1</name>
        <sequence type="displayed"/>
    </isoform>
    <isoform>
        <id>Q8N983-2</id>
        <name>2</name>
        <sequence type="described" ref="VSP_011026"/>
    </isoform>
    <isoform>
        <id>Q8N983-3</id>
        <name>3</name>
        <sequence type="described" ref="VSP_011027 VSP_011028"/>
    </isoform>
    <isoform>
        <id>Q8N983-4</id>
        <name>4</name>
        <sequence type="described" ref="VSP_011029 VSP_011030"/>
    </isoform>
    <isoform>
        <id>Q8N983-6</id>
        <name>5</name>
        <sequence type="described" ref="VSP_054092"/>
    </isoform>
    <isoform>
        <id>Q8N983-7</id>
        <name>6</name>
        <sequence type="described" ref="VSP_054093"/>
    </isoform>
</comment>
<comment type="tissue specificity">
    <text evidence="2">High relative levels in skeletal muscle and testis. Lower levels of expression in the heart, brain, placenta, lung, liver, kidney, pancreas, spleen, thymus, prostate, ovary, small intestine, colon and leukocytes. Expression is coregulated with TWNK.</text>
</comment>
<comment type="similarity">
    <text evidence="11">Belongs to the mitochondrion-specific ribosomal protein mL43 family.</text>
</comment>
<comment type="sequence caution" evidence="11">
    <conflict type="frameshift">
        <sequence resource="EMBL-CDS" id="BAB40861"/>
    </conflict>
</comment>
<protein>
    <recommendedName>
        <fullName evidence="10">Large ribosomal subunit protein mL43</fullName>
    </recommendedName>
    <alternativeName>
        <fullName>39S ribosomal protein L43, mitochondrial</fullName>
        <shortName>L43mt</shortName>
        <shortName>MRP-L43</shortName>
    </alternativeName>
    <alternativeName>
        <fullName>Mitochondrial ribosomal protein bMRP36a</fullName>
    </alternativeName>
</protein>
<accession>Q8N983</accession>
<accession>B1AL06</accession>
<accession>B1AL07</accession>
<accession>B1AL09</accession>
<accession>B1AL10</accession>
<accession>C9J5Q3</accession>
<accession>D3DR71</accession>
<accession>Q5JW06</accession>
<accession>Q7Z719</accession>
<accession>Q7Z7H6</accession>
<accession>Q86XN1</accession>
<accession>Q9BYC7</accession>
<proteinExistence type="evidence at protein level"/>
<organism>
    <name type="scientific">Homo sapiens</name>
    <name type="common">Human</name>
    <dbReference type="NCBI Taxonomy" id="9606"/>
    <lineage>
        <taxon>Eukaryota</taxon>
        <taxon>Metazoa</taxon>
        <taxon>Chordata</taxon>
        <taxon>Craniata</taxon>
        <taxon>Vertebrata</taxon>
        <taxon>Euteleostomi</taxon>
        <taxon>Mammalia</taxon>
        <taxon>Eutheria</taxon>
        <taxon>Euarchontoglires</taxon>
        <taxon>Primates</taxon>
        <taxon>Haplorrhini</taxon>
        <taxon>Catarrhini</taxon>
        <taxon>Hominidae</taxon>
        <taxon>Homo</taxon>
    </lineage>
</organism>
<reference key="1">
    <citation type="journal article" date="2001" name="J. Biol. Chem.">
        <title>Structural compensation for the deficit of rRNA with proteins in the mammalian mitochondrial ribosome. Systematic analysis of protein components of the large ribosomal subunit from mammalian mitochondria.</title>
        <authorList>
            <person name="Suzuki T."/>
            <person name="Terasaki M."/>
            <person name="Takemoto-Hori C."/>
            <person name="Hanada T."/>
            <person name="Ueda T."/>
            <person name="Wada A."/>
            <person name="Watanabe K."/>
        </authorList>
    </citation>
    <scope>NUCLEOTIDE SEQUENCE [MRNA] (ISOFORM 4)</scope>
</reference>
<reference key="2">
    <citation type="journal article" date="2004" name="Nat. Genet.">
        <title>Complete sequencing and characterization of 21,243 full-length human cDNAs.</title>
        <authorList>
            <person name="Ota T."/>
            <person name="Suzuki Y."/>
            <person name="Nishikawa T."/>
            <person name="Otsuki T."/>
            <person name="Sugiyama T."/>
            <person name="Irie R."/>
            <person name="Wakamatsu A."/>
            <person name="Hayashi K."/>
            <person name="Sato H."/>
            <person name="Nagai K."/>
            <person name="Kimura K."/>
            <person name="Makita H."/>
            <person name="Sekine M."/>
            <person name="Obayashi M."/>
            <person name="Nishi T."/>
            <person name="Shibahara T."/>
            <person name="Tanaka T."/>
            <person name="Ishii S."/>
            <person name="Yamamoto J."/>
            <person name="Saito K."/>
            <person name="Kawai Y."/>
            <person name="Isono Y."/>
            <person name="Nakamura Y."/>
            <person name="Nagahari K."/>
            <person name="Murakami K."/>
            <person name="Yasuda T."/>
            <person name="Iwayanagi T."/>
            <person name="Wagatsuma M."/>
            <person name="Shiratori A."/>
            <person name="Sudo H."/>
            <person name="Hosoiri T."/>
            <person name="Kaku Y."/>
            <person name="Kodaira H."/>
            <person name="Kondo H."/>
            <person name="Sugawara M."/>
            <person name="Takahashi M."/>
            <person name="Kanda K."/>
            <person name="Yokoi T."/>
            <person name="Furuya T."/>
            <person name="Kikkawa E."/>
            <person name="Omura Y."/>
            <person name="Abe K."/>
            <person name="Kamihara K."/>
            <person name="Katsuta N."/>
            <person name="Sato K."/>
            <person name="Tanikawa M."/>
            <person name="Yamazaki M."/>
            <person name="Ninomiya K."/>
            <person name="Ishibashi T."/>
            <person name="Yamashita H."/>
            <person name="Murakawa K."/>
            <person name="Fujimori K."/>
            <person name="Tanai H."/>
            <person name="Kimata M."/>
            <person name="Watanabe M."/>
            <person name="Hiraoka S."/>
            <person name="Chiba Y."/>
            <person name="Ishida S."/>
            <person name="Ono Y."/>
            <person name="Takiguchi S."/>
            <person name="Watanabe S."/>
            <person name="Yosida M."/>
            <person name="Hotuta T."/>
            <person name="Kusano J."/>
            <person name="Kanehori K."/>
            <person name="Takahashi-Fujii A."/>
            <person name="Hara H."/>
            <person name="Tanase T.-O."/>
            <person name="Nomura Y."/>
            <person name="Togiya S."/>
            <person name="Komai F."/>
            <person name="Hara R."/>
            <person name="Takeuchi K."/>
            <person name="Arita M."/>
            <person name="Imose N."/>
            <person name="Musashino K."/>
            <person name="Yuuki H."/>
            <person name="Oshima A."/>
            <person name="Sasaki N."/>
            <person name="Aotsuka S."/>
            <person name="Yoshikawa Y."/>
            <person name="Matsunawa H."/>
            <person name="Ichihara T."/>
            <person name="Shiohata N."/>
            <person name="Sano S."/>
            <person name="Moriya S."/>
            <person name="Momiyama H."/>
            <person name="Satoh N."/>
            <person name="Takami S."/>
            <person name="Terashima Y."/>
            <person name="Suzuki O."/>
            <person name="Nakagawa S."/>
            <person name="Senoh A."/>
            <person name="Mizoguchi H."/>
            <person name="Goto Y."/>
            <person name="Shimizu F."/>
            <person name="Wakebe H."/>
            <person name="Hishigaki H."/>
            <person name="Watanabe T."/>
            <person name="Sugiyama A."/>
            <person name="Takemoto M."/>
            <person name="Kawakami B."/>
            <person name="Yamazaki M."/>
            <person name="Watanabe K."/>
            <person name="Kumagai A."/>
            <person name="Itakura S."/>
            <person name="Fukuzumi Y."/>
            <person name="Fujimori Y."/>
            <person name="Komiyama M."/>
            <person name="Tashiro H."/>
            <person name="Tanigami A."/>
            <person name="Fujiwara T."/>
            <person name="Ono T."/>
            <person name="Yamada K."/>
            <person name="Fujii Y."/>
            <person name="Ozaki K."/>
            <person name="Hirao M."/>
            <person name="Ohmori Y."/>
            <person name="Kawabata A."/>
            <person name="Hikiji T."/>
            <person name="Kobatake N."/>
            <person name="Inagaki H."/>
            <person name="Ikema Y."/>
            <person name="Okamoto S."/>
            <person name="Okitani R."/>
            <person name="Kawakami T."/>
            <person name="Noguchi S."/>
            <person name="Itoh T."/>
            <person name="Shigeta K."/>
            <person name="Senba T."/>
            <person name="Matsumura K."/>
            <person name="Nakajima Y."/>
            <person name="Mizuno T."/>
            <person name="Morinaga M."/>
            <person name="Sasaki M."/>
            <person name="Togashi T."/>
            <person name="Oyama M."/>
            <person name="Hata H."/>
            <person name="Watanabe M."/>
            <person name="Komatsu T."/>
            <person name="Mizushima-Sugano J."/>
            <person name="Satoh T."/>
            <person name="Shirai Y."/>
            <person name="Takahashi Y."/>
            <person name="Nakagawa K."/>
            <person name="Okumura K."/>
            <person name="Nagase T."/>
            <person name="Nomura N."/>
            <person name="Kikuchi H."/>
            <person name="Masuho Y."/>
            <person name="Yamashita R."/>
            <person name="Nakai K."/>
            <person name="Yada T."/>
            <person name="Nakamura Y."/>
            <person name="Ohara O."/>
            <person name="Isogai T."/>
            <person name="Sugano S."/>
        </authorList>
    </citation>
    <scope>NUCLEOTIDE SEQUENCE [LARGE SCALE MRNA] (ISOFORMS 1 AND 6)</scope>
    <source>
        <tissue>Brain</tissue>
    </source>
</reference>
<reference key="3">
    <citation type="journal article" date="2004" name="Nature">
        <title>The DNA sequence and comparative analysis of human chromosome 10.</title>
        <authorList>
            <person name="Deloukas P."/>
            <person name="Earthrowl M.E."/>
            <person name="Grafham D.V."/>
            <person name="Rubenfield M."/>
            <person name="French L."/>
            <person name="Steward C.A."/>
            <person name="Sims S.K."/>
            <person name="Jones M.C."/>
            <person name="Searle S."/>
            <person name="Scott C."/>
            <person name="Howe K."/>
            <person name="Hunt S.E."/>
            <person name="Andrews T.D."/>
            <person name="Gilbert J.G.R."/>
            <person name="Swarbreck D."/>
            <person name="Ashurst J.L."/>
            <person name="Taylor A."/>
            <person name="Battles J."/>
            <person name="Bird C.P."/>
            <person name="Ainscough R."/>
            <person name="Almeida J.P."/>
            <person name="Ashwell R.I.S."/>
            <person name="Ambrose K.D."/>
            <person name="Babbage A.K."/>
            <person name="Bagguley C.L."/>
            <person name="Bailey J."/>
            <person name="Banerjee R."/>
            <person name="Bates K."/>
            <person name="Beasley H."/>
            <person name="Bray-Allen S."/>
            <person name="Brown A.J."/>
            <person name="Brown J.Y."/>
            <person name="Burford D.C."/>
            <person name="Burrill W."/>
            <person name="Burton J."/>
            <person name="Cahill P."/>
            <person name="Camire D."/>
            <person name="Carter N.P."/>
            <person name="Chapman J.C."/>
            <person name="Clark S.Y."/>
            <person name="Clarke G."/>
            <person name="Clee C.M."/>
            <person name="Clegg S."/>
            <person name="Corby N."/>
            <person name="Coulson A."/>
            <person name="Dhami P."/>
            <person name="Dutta I."/>
            <person name="Dunn M."/>
            <person name="Faulkner L."/>
            <person name="Frankish A."/>
            <person name="Frankland J.A."/>
            <person name="Garner P."/>
            <person name="Garnett J."/>
            <person name="Gribble S."/>
            <person name="Griffiths C."/>
            <person name="Grocock R."/>
            <person name="Gustafson E."/>
            <person name="Hammond S."/>
            <person name="Harley J.L."/>
            <person name="Hart E."/>
            <person name="Heath P.D."/>
            <person name="Ho T.P."/>
            <person name="Hopkins B."/>
            <person name="Horne J."/>
            <person name="Howden P.J."/>
            <person name="Huckle E."/>
            <person name="Hynds C."/>
            <person name="Johnson C."/>
            <person name="Johnson D."/>
            <person name="Kana A."/>
            <person name="Kay M."/>
            <person name="Kimberley A.M."/>
            <person name="Kershaw J.K."/>
            <person name="Kokkinaki M."/>
            <person name="Laird G.K."/>
            <person name="Lawlor S."/>
            <person name="Lee H.M."/>
            <person name="Leongamornlert D.A."/>
            <person name="Laird G."/>
            <person name="Lloyd C."/>
            <person name="Lloyd D.M."/>
            <person name="Loveland J."/>
            <person name="Lovell J."/>
            <person name="McLaren S."/>
            <person name="McLay K.E."/>
            <person name="McMurray A."/>
            <person name="Mashreghi-Mohammadi M."/>
            <person name="Matthews L."/>
            <person name="Milne S."/>
            <person name="Nickerson T."/>
            <person name="Nguyen M."/>
            <person name="Overton-Larty E."/>
            <person name="Palmer S.A."/>
            <person name="Pearce A.V."/>
            <person name="Peck A.I."/>
            <person name="Pelan S."/>
            <person name="Phillimore B."/>
            <person name="Porter K."/>
            <person name="Rice C.M."/>
            <person name="Rogosin A."/>
            <person name="Ross M.T."/>
            <person name="Sarafidou T."/>
            <person name="Sehra H.K."/>
            <person name="Shownkeen R."/>
            <person name="Skuce C.D."/>
            <person name="Smith M."/>
            <person name="Standring L."/>
            <person name="Sycamore N."/>
            <person name="Tester J."/>
            <person name="Thorpe A."/>
            <person name="Torcasso W."/>
            <person name="Tracey A."/>
            <person name="Tromans A."/>
            <person name="Tsolas J."/>
            <person name="Wall M."/>
            <person name="Walsh J."/>
            <person name="Wang H."/>
            <person name="Weinstock K."/>
            <person name="West A.P."/>
            <person name="Willey D.L."/>
            <person name="Whitehead S.L."/>
            <person name="Wilming L."/>
            <person name="Wray P.W."/>
            <person name="Young L."/>
            <person name="Chen Y."/>
            <person name="Lovering R.C."/>
            <person name="Moschonas N.K."/>
            <person name="Siebert R."/>
            <person name="Fechtel K."/>
            <person name="Bentley D."/>
            <person name="Durbin R.M."/>
            <person name="Hubbard T."/>
            <person name="Doucette-Stamm L."/>
            <person name="Beck S."/>
            <person name="Smith D.R."/>
            <person name="Rogers J."/>
        </authorList>
    </citation>
    <scope>NUCLEOTIDE SEQUENCE [LARGE SCALE GENOMIC DNA]</scope>
</reference>
<reference key="4">
    <citation type="submission" date="2005-09" db="EMBL/GenBank/DDBJ databases">
        <authorList>
            <person name="Mural R.J."/>
            <person name="Istrail S."/>
            <person name="Sutton G.G."/>
            <person name="Florea L."/>
            <person name="Halpern A.L."/>
            <person name="Mobarry C.M."/>
            <person name="Lippert R."/>
            <person name="Walenz B."/>
            <person name="Shatkay H."/>
            <person name="Dew I."/>
            <person name="Miller J.R."/>
            <person name="Flanigan M.J."/>
            <person name="Edwards N.J."/>
            <person name="Bolanos R."/>
            <person name="Fasulo D."/>
            <person name="Halldorsson B.V."/>
            <person name="Hannenhalli S."/>
            <person name="Turner R."/>
            <person name="Yooseph S."/>
            <person name="Lu F."/>
            <person name="Nusskern D.R."/>
            <person name="Shue B.C."/>
            <person name="Zheng X.H."/>
            <person name="Zhong F."/>
            <person name="Delcher A.L."/>
            <person name="Huson D.H."/>
            <person name="Kravitz S.A."/>
            <person name="Mouchard L."/>
            <person name="Reinert K."/>
            <person name="Remington K.A."/>
            <person name="Clark A.G."/>
            <person name="Waterman M.S."/>
            <person name="Eichler E.E."/>
            <person name="Adams M.D."/>
            <person name="Hunkapiller M.W."/>
            <person name="Myers E.W."/>
            <person name="Venter J.C."/>
        </authorList>
    </citation>
    <scope>NUCLEOTIDE SEQUENCE [LARGE SCALE GENOMIC DNA]</scope>
</reference>
<reference key="5">
    <citation type="journal article" date="2004" name="Genome Res.">
        <title>The status, quality, and expansion of the NIH full-length cDNA project: the Mammalian Gene Collection (MGC).</title>
        <authorList>
            <consortium name="The MGC Project Team"/>
        </authorList>
    </citation>
    <scope>NUCLEOTIDE SEQUENCE [LARGE SCALE MRNA] (ISOFORMS 1; 2; 3 AND 4)</scope>
    <source>
        <tissue>Ovary</tissue>
        <tissue>Pancreas</tissue>
        <tissue>Skin</tissue>
        <tissue>Uterus</tissue>
    </source>
</reference>
<reference key="6">
    <citation type="journal article" date="2004" name="Hum. Mol. Genet.">
        <title>Twinkle helicase is essential for mtDNA maintenance and regulates mtDNA copy number.</title>
        <authorList>
            <person name="Tyynismaa H."/>
            <person name="Sembongi H."/>
            <person name="Bokori-Brown M."/>
            <person name="Granycome C."/>
            <person name="Ashley N."/>
            <person name="Poulton J."/>
            <person name="Jalanko A."/>
            <person name="Spelbrink J.N."/>
            <person name="Holt I.J."/>
            <person name="Suomalainen A."/>
        </authorList>
    </citation>
    <scope>TISSUE SPECIFICITY</scope>
    <scope>COREGULATION WITH TWNK</scope>
</reference>
<reference key="7">
    <citation type="journal article" date="2011" name="BMC Syst. Biol.">
        <title>Initial characterization of the human central proteome.</title>
        <authorList>
            <person name="Burkard T.R."/>
            <person name="Planyavsky M."/>
            <person name="Kaupe I."/>
            <person name="Breitwieser F.P."/>
            <person name="Buerckstuemmer T."/>
            <person name="Bennett K.L."/>
            <person name="Superti-Furga G."/>
            <person name="Colinge J."/>
        </authorList>
    </citation>
    <scope>IDENTIFICATION BY MASS SPECTROMETRY [LARGE SCALE ANALYSIS]</scope>
</reference>
<reference key="8">
    <citation type="journal article" date="2015" name="Proteomics">
        <title>N-terminome analysis of the human mitochondrial proteome.</title>
        <authorList>
            <person name="Vaca Jacome A.S."/>
            <person name="Rabilloud T."/>
            <person name="Schaeffer-Reiss C."/>
            <person name="Rompais M."/>
            <person name="Ayoub D."/>
            <person name="Lane L."/>
            <person name="Bairoch A."/>
            <person name="Van Dorsselaer A."/>
            <person name="Carapito C."/>
        </authorList>
    </citation>
    <scope>IDENTIFICATION BY MASS SPECTROMETRY [LARGE SCALE ANALYSIS]</scope>
</reference>
<reference evidence="12" key="9">
    <citation type="journal article" date="2014" name="Science">
        <title>Structure of the large ribosomal subunit from human mitochondria.</title>
        <authorList>
            <person name="Brown A."/>
            <person name="Amunts A."/>
            <person name="Bai X.C."/>
            <person name="Sugimoto Y."/>
            <person name="Edwards P.C."/>
            <person name="Murshudov G."/>
            <person name="Scheres S.H."/>
            <person name="Ramakrishnan V."/>
        </authorList>
    </citation>
    <scope>STRUCTURE BY ELECTRON MICROSCOPY (3.40 ANGSTROMS) OF 1-155</scope>
    <scope>SUBCELLULAR LOCATION</scope>
    <scope>SUBUNIT</scope>
</reference>
<reference evidence="13" key="10">
    <citation type="journal article" date="2015" name="Science">
        <title>Ribosome. The structure of the human mitochondrial ribosome.</title>
        <authorList>
            <person name="Amunts A."/>
            <person name="Brown A."/>
            <person name="Toots J."/>
            <person name="Scheres S.H."/>
            <person name="Ramakrishnan V."/>
        </authorList>
    </citation>
    <scope>STRUCTURE BY ELECTRON MICROSCOPY (3.50 ANGSTROMS) OF 1-155</scope>
    <scope>SUBCELLULAR LOCATION</scope>
    <scope>SUBUNIT</scope>
</reference>
<reference evidence="14 15" key="11">
    <citation type="journal article" date="2017" name="Nat. Struct. Mol. Biol.">
        <title>Structures of the human mitochondrial ribosome in native states of assembly.</title>
        <authorList>
            <person name="Brown A."/>
            <person name="Rathore S."/>
            <person name="Kimanius D."/>
            <person name="Aibara S."/>
            <person name="Bai X.C."/>
            <person name="Rorbach J."/>
            <person name="Amunts A."/>
            <person name="Ramakrishnan V."/>
        </authorList>
    </citation>
    <scope>STRUCTURE BY ELECTRON MICROSCOPY (3.03 ANGSTROMS)</scope>
    <scope>SUBCELLULAR LOCATION</scope>
    <scope>SUBUNIT</scope>
</reference>
<reference evidence="16 17" key="12">
    <citation type="journal article" date="2022" name="Nat. Commun.">
        <title>A late-stage assembly checkpoint of the human mitochondrial ribosome large subunit.</title>
        <authorList>
            <person name="Rebelo-Guiomar P."/>
            <person name="Pellegrino S."/>
            <person name="Dent K.C."/>
            <person name="Sas-Chen A."/>
            <person name="Miller-Fleming L."/>
            <person name="Garone C."/>
            <person name="Van Haute L."/>
            <person name="Rogan J.F."/>
            <person name="Dinan A."/>
            <person name="Firth A.E."/>
            <person name="Andrews B."/>
            <person name="Whitworth A.J."/>
            <person name="Schwartz S."/>
            <person name="Warren A.J."/>
            <person name="Minczuk M."/>
        </authorList>
    </citation>
    <scope>STRUCTURE BY ELECTRON MICROSCOPY (2.9 ANGSTROMS) IN COMPLEX WITH MTLSU</scope>
    <scope>SUBUNIT</scope>
</reference>
<evidence type="ECO:0000255" key="1"/>
<evidence type="ECO:0000269" key="2">
    <source>
    </source>
</evidence>
<evidence type="ECO:0000269" key="3">
    <source>
    </source>
</evidence>
<evidence type="ECO:0000269" key="4">
    <source>
    </source>
</evidence>
<evidence type="ECO:0000269" key="5">
    <source>
    </source>
</evidence>
<evidence type="ECO:0000269" key="6">
    <source>
    </source>
</evidence>
<evidence type="ECO:0000303" key="7">
    <source>
    </source>
</evidence>
<evidence type="ECO:0000303" key="8">
    <source>
    </source>
</evidence>
<evidence type="ECO:0000303" key="9">
    <source>
    </source>
</evidence>
<evidence type="ECO:0000303" key="10">
    <source>
    </source>
</evidence>
<evidence type="ECO:0000305" key="11"/>
<evidence type="ECO:0007744" key="12">
    <source>
        <dbReference type="PDB" id="3J7Y"/>
    </source>
</evidence>
<evidence type="ECO:0007744" key="13">
    <source>
        <dbReference type="PDB" id="3J9M"/>
    </source>
</evidence>
<evidence type="ECO:0007744" key="14">
    <source>
        <dbReference type="PDB" id="5OOL"/>
    </source>
</evidence>
<evidence type="ECO:0007744" key="15">
    <source>
        <dbReference type="PDB" id="5OOM"/>
    </source>
</evidence>
<evidence type="ECO:0007744" key="16">
    <source>
        <dbReference type="PDB" id="7QH6"/>
    </source>
</evidence>
<evidence type="ECO:0007744" key="17">
    <source>
        <dbReference type="PDB" id="7QH7"/>
    </source>
</evidence>
<evidence type="ECO:0007829" key="18">
    <source>
        <dbReference type="PDB" id="7OF0"/>
    </source>
</evidence>
<evidence type="ECO:0007829" key="19">
    <source>
        <dbReference type="PDB" id="7QH6"/>
    </source>
</evidence>
<evidence type="ECO:0007829" key="20">
    <source>
        <dbReference type="PDB" id="7QH7"/>
    </source>
</evidence>
<evidence type="ECO:0007829" key="21">
    <source>
        <dbReference type="PDB" id="8QU5"/>
    </source>
</evidence>
<keyword id="KW-0002">3D-structure</keyword>
<keyword id="KW-0025">Alternative splicing</keyword>
<keyword id="KW-0496">Mitochondrion</keyword>
<keyword id="KW-1267">Proteomics identification</keyword>
<keyword id="KW-1185">Reference proteome</keyword>
<keyword id="KW-0687">Ribonucleoprotein</keyword>
<keyword id="KW-0689">Ribosomal protein</keyword>
<keyword id="KW-0809">Transit peptide</keyword>
<sequence length="215" mass="23431">MTARGTPSRFLASVLHNGLGRYVQQLQRLSFSVSRDGASSRGAREFVEREVIDFARRNPGVVIYVNSRPCCVPRVVAEYLNGAVREESIHCKSVEEISTLVQKLADQSGLDVIRIRKPFHTDNPSIQGQWHPFTNKPTTFRGLRPREVQDPAPAQDTGLRLSAVAPQILLPGWPDPPDLPTVDPISSSLTSAPAPMLSAVSCLPIVPALTTVCSA</sequence>
<name>RM43_HUMAN</name>
<gene>
    <name type="primary">MRPL43</name>
</gene>
<feature type="transit peptide" description="Mitochondrion" evidence="1">
    <location>
        <begin position="1"/>
        <end status="unknown"/>
    </location>
</feature>
<feature type="chain" id="PRO_0000030561" description="Large ribosomal subunit protein mL43">
    <location>
        <begin status="unknown"/>
        <end position="215"/>
    </location>
</feature>
<feature type="splice variant" id="VSP_011027" description="In isoform 3." evidence="9">
    <original>DTGLRLSAV</original>
    <variation>CLLLGAVTL</variation>
    <location>
        <begin position="156"/>
        <end position="164"/>
    </location>
</feature>
<feature type="splice variant" id="VSP_011029" description="In isoform 4." evidence="7 9">
    <original>DTGL</original>
    <variation>VQAQ</variation>
    <location>
        <begin position="156"/>
        <end position="159"/>
    </location>
</feature>
<feature type="splice variant" id="VSP_054092" description="In isoform 5." evidence="11">
    <original>TGLRLSAVAPQILLPGWPDPPDLPTVDPISSSLTSAPAPMLSAVSCLPIVPALTTVCSA</original>
    <variation>AAEFLGEGAGPCWYSIVALPQKHIAIAIHPPQPAGQCHQAIGHWPETVCSCTADPPARLARPNISSVIRSSLGKYPLPS</variation>
    <location>
        <begin position="157"/>
        <end position="215"/>
    </location>
</feature>
<feature type="splice variant" id="VSP_054093" description="In isoform 6." evidence="8">
    <original>TGLRLSAVAPQILLPGWPDPPDLPTVDPISSSLTSAPAPMLSAVSCLPIVPALTTVCSA</original>
    <variation>AAEFLGEGAGPCWYSIVALPQKHIAIAIHPPQPAGQCHQAIGHWPETVCSCTADPPARLARPTRPPHSGSYLILIDLCSSPYAVRSFLPPDCPCTDHCVLSVKAA</variation>
    <location>
        <begin position="157"/>
        <end position="215"/>
    </location>
</feature>
<feature type="splice variant" id="VSP_011030" description="In isoform 4." evidence="7 9">
    <location>
        <begin position="160"/>
        <end position="215"/>
    </location>
</feature>
<feature type="splice variant" id="VSP_011028" description="In isoform 3." evidence="9">
    <location>
        <begin position="165"/>
        <end position="215"/>
    </location>
</feature>
<feature type="splice variant" id="VSP_011026" description="In isoform 2." evidence="9">
    <original>PDLPTVDPISSSLTSAPAPMLSAVSCLPIVPALTTVCSA</original>
    <variation>ISVQSSDLPWGNTHYRPEPLSSTTWL</variation>
    <location>
        <begin position="177"/>
        <end position="215"/>
    </location>
</feature>
<feature type="turn" evidence="21">
    <location>
        <begin position="3"/>
        <end position="5"/>
    </location>
</feature>
<feature type="strand" evidence="20">
    <location>
        <begin position="14"/>
        <end position="16"/>
    </location>
</feature>
<feature type="turn" evidence="21">
    <location>
        <begin position="17"/>
        <end position="19"/>
    </location>
</feature>
<feature type="strand" evidence="18">
    <location>
        <begin position="25"/>
        <end position="32"/>
    </location>
</feature>
<feature type="strand" evidence="19">
    <location>
        <begin position="34"/>
        <end position="36"/>
    </location>
</feature>
<feature type="helix" evidence="18">
    <location>
        <begin position="38"/>
        <end position="40"/>
    </location>
</feature>
<feature type="helix" evidence="18">
    <location>
        <begin position="41"/>
        <end position="49"/>
    </location>
</feature>
<feature type="helix" evidence="18">
    <location>
        <begin position="51"/>
        <end position="57"/>
    </location>
</feature>
<feature type="strand" evidence="18">
    <location>
        <begin position="61"/>
        <end position="65"/>
    </location>
</feature>
<feature type="strand" evidence="18">
    <location>
        <begin position="70"/>
        <end position="72"/>
    </location>
</feature>
<feature type="strand" evidence="18">
    <location>
        <begin position="74"/>
        <end position="79"/>
    </location>
</feature>
<feature type="strand" evidence="18">
    <location>
        <begin position="84"/>
        <end position="88"/>
    </location>
</feature>
<feature type="helix" evidence="18">
    <location>
        <begin position="94"/>
        <end position="106"/>
    </location>
</feature>
<feature type="strand" evidence="18">
    <location>
        <begin position="113"/>
        <end position="116"/>
    </location>
</feature>
<feature type="strand" evidence="18">
    <location>
        <begin position="118"/>
        <end position="120"/>
    </location>
</feature>
<feature type="turn" evidence="18">
    <location>
        <begin position="132"/>
        <end position="135"/>
    </location>
</feature>
<feature type="helix" evidence="18">
    <location>
        <begin position="140"/>
        <end position="142"/>
    </location>
</feature>